<name>ISPD_BACTN</name>
<gene>
    <name evidence="1" type="primary">ispD</name>
    <name type="ordered locus">BT_3923</name>
</gene>
<reference key="1">
    <citation type="journal article" date="2003" name="Science">
        <title>A genomic view of the human-Bacteroides thetaiotaomicron symbiosis.</title>
        <authorList>
            <person name="Xu J."/>
            <person name="Bjursell M.K."/>
            <person name="Himrod J."/>
            <person name="Deng S."/>
            <person name="Carmichael L.K."/>
            <person name="Chiang H.C."/>
            <person name="Hooper L.V."/>
            <person name="Gordon J.I."/>
        </authorList>
    </citation>
    <scope>NUCLEOTIDE SEQUENCE [LARGE SCALE GENOMIC DNA]</scope>
    <source>
        <strain>ATCC 29148 / DSM 2079 / JCM 5827 / CCUG 10774 / NCTC 10582 / VPI-5482 / E50</strain>
    </source>
</reference>
<protein>
    <recommendedName>
        <fullName evidence="1">2-C-methyl-D-erythritol 4-phosphate cytidylyltransferase</fullName>
        <ecNumber evidence="1">2.7.7.60</ecNumber>
    </recommendedName>
    <alternativeName>
        <fullName evidence="1">4-diphosphocytidyl-2C-methyl-D-erythritol synthase</fullName>
    </alternativeName>
    <alternativeName>
        <fullName evidence="1">MEP cytidylyltransferase</fullName>
        <shortName evidence="1">MCT</shortName>
    </alternativeName>
</protein>
<keyword id="KW-0414">Isoprene biosynthesis</keyword>
<keyword id="KW-0548">Nucleotidyltransferase</keyword>
<keyword id="KW-1185">Reference proteome</keyword>
<keyword id="KW-0808">Transferase</keyword>
<dbReference type="EC" id="2.7.7.60" evidence="1"/>
<dbReference type="EMBL" id="AE015928">
    <property type="protein sequence ID" value="AAO79028.1"/>
    <property type="molecule type" value="Genomic_DNA"/>
</dbReference>
<dbReference type="RefSeq" id="NP_812834.1">
    <property type="nucleotide sequence ID" value="NC_004663.1"/>
</dbReference>
<dbReference type="RefSeq" id="WP_011109021.1">
    <property type="nucleotide sequence ID" value="NC_004663.1"/>
</dbReference>
<dbReference type="SMR" id="Q8A0U8"/>
<dbReference type="FunCoup" id="Q8A0U8">
    <property type="interactions" value="459"/>
</dbReference>
<dbReference type="STRING" id="226186.BT_3923"/>
<dbReference type="PaxDb" id="226186-BT_3923"/>
<dbReference type="EnsemblBacteria" id="AAO79028">
    <property type="protein sequence ID" value="AAO79028"/>
    <property type="gene ID" value="BT_3923"/>
</dbReference>
<dbReference type="GeneID" id="60925096"/>
<dbReference type="KEGG" id="bth:BT_3923"/>
<dbReference type="PATRIC" id="fig|226186.12.peg.3987"/>
<dbReference type="eggNOG" id="COG1211">
    <property type="taxonomic scope" value="Bacteria"/>
</dbReference>
<dbReference type="HOGENOM" id="CLU_061281_2_2_10"/>
<dbReference type="InParanoid" id="Q8A0U8"/>
<dbReference type="OrthoDB" id="9806837at2"/>
<dbReference type="UniPathway" id="UPA00056">
    <property type="reaction ID" value="UER00093"/>
</dbReference>
<dbReference type="Proteomes" id="UP000001414">
    <property type="component" value="Chromosome"/>
</dbReference>
<dbReference type="GO" id="GO:0050518">
    <property type="term" value="F:2-C-methyl-D-erythritol 4-phosphate cytidylyltransferase activity"/>
    <property type="evidence" value="ECO:0000318"/>
    <property type="project" value="GO_Central"/>
</dbReference>
<dbReference type="GO" id="GO:0019288">
    <property type="term" value="P:isopentenyl diphosphate biosynthetic process, methylerythritol 4-phosphate pathway"/>
    <property type="evidence" value="ECO:0007669"/>
    <property type="project" value="UniProtKB-UniRule"/>
</dbReference>
<dbReference type="CDD" id="cd02516">
    <property type="entry name" value="CDP-ME_synthetase"/>
    <property type="match status" value="1"/>
</dbReference>
<dbReference type="FunFam" id="3.90.550.10:FF:000003">
    <property type="entry name" value="2-C-methyl-D-erythritol 4-phosphate cytidylyltransferase"/>
    <property type="match status" value="1"/>
</dbReference>
<dbReference type="Gene3D" id="3.90.550.10">
    <property type="entry name" value="Spore Coat Polysaccharide Biosynthesis Protein SpsA, Chain A"/>
    <property type="match status" value="1"/>
</dbReference>
<dbReference type="HAMAP" id="MF_00108">
    <property type="entry name" value="IspD"/>
    <property type="match status" value="1"/>
</dbReference>
<dbReference type="InterPro" id="IPR001228">
    <property type="entry name" value="IspD"/>
</dbReference>
<dbReference type="InterPro" id="IPR034683">
    <property type="entry name" value="IspD/TarI"/>
</dbReference>
<dbReference type="InterPro" id="IPR050088">
    <property type="entry name" value="IspD/TarI_cytidylyltransf_bact"/>
</dbReference>
<dbReference type="InterPro" id="IPR029044">
    <property type="entry name" value="Nucleotide-diphossugar_trans"/>
</dbReference>
<dbReference type="NCBIfam" id="TIGR00453">
    <property type="entry name" value="ispD"/>
    <property type="match status" value="1"/>
</dbReference>
<dbReference type="NCBIfam" id="NF001186">
    <property type="entry name" value="PRK00155.2-3"/>
    <property type="match status" value="1"/>
</dbReference>
<dbReference type="PANTHER" id="PTHR32125">
    <property type="entry name" value="2-C-METHYL-D-ERYTHRITOL 4-PHOSPHATE CYTIDYLYLTRANSFERASE, CHLOROPLASTIC"/>
    <property type="match status" value="1"/>
</dbReference>
<dbReference type="PANTHER" id="PTHR32125:SF4">
    <property type="entry name" value="2-C-METHYL-D-ERYTHRITOL 4-PHOSPHATE CYTIDYLYLTRANSFERASE, CHLOROPLASTIC"/>
    <property type="match status" value="1"/>
</dbReference>
<dbReference type="Pfam" id="PF01128">
    <property type="entry name" value="IspD"/>
    <property type="match status" value="1"/>
</dbReference>
<dbReference type="SUPFAM" id="SSF53448">
    <property type="entry name" value="Nucleotide-diphospho-sugar transferases"/>
    <property type="match status" value="1"/>
</dbReference>
<accession>Q8A0U8</accession>
<organism>
    <name type="scientific">Bacteroides thetaiotaomicron (strain ATCC 29148 / DSM 2079 / JCM 5827 / CCUG 10774 / NCTC 10582 / VPI-5482 / E50)</name>
    <dbReference type="NCBI Taxonomy" id="226186"/>
    <lineage>
        <taxon>Bacteria</taxon>
        <taxon>Pseudomonadati</taxon>
        <taxon>Bacteroidota</taxon>
        <taxon>Bacteroidia</taxon>
        <taxon>Bacteroidales</taxon>
        <taxon>Bacteroidaceae</taxon>
        <taxon>Bacteroides</taxon>
    </lineage>
</organism>
<sequence>MKQSVIIVAGGKGLRMGSDLPKQFLPVGGKPVLMHTLEAFRKYDAMLQIILVLPREQQDFWKQLCEEHHFSVEHLVADGGETRFHSVKNGLALVQAPGLVGVHDGVRPFVTLEVIRRCYELAEQHKAVIPVVDVVETLRHLTDAGSETVSRTEYKLVQTPQVFEVELLKQAYGQEFTPFFTDDASVVEAMGVPVHLAEGNRENIKITTPFDLKIGSALL</sequence>
<comment type="function">
    <text evidence="1">Catalyzes the formation of 4-diphosphocytidyl-2-C-methyl-D-erythritol from CTP and 2-C-methyl-D-erythritol 4-phosphate (MEP).</text>
</comment>
<comment type="catalytic activity">
    <reaction evidence="1">
        <text>2-C-methyl-D-erythritol 4-phosphate + CTP + H(+) = 4-CDP-2-C-methyl-D-erythritol + diphosphate</text>
        <dbReference type="Rhea" id="RHEA:13429"/>
        <dbReference type="ChEBI" id="CHEBI:15378"/>
        <dbReference type="ChEBI" id="CHEBI:33019"/>
        <dbReference type="ChEBI" id="CHEBI:37563"/>
        <dbReference type="ChEBI" id="CHEBI:57823"/>
        <dbReference type="ChEBI" id="CHEBI:58262"/>
        <dbReference type="EC" id="2.7.7.60"/>
    </reaction>
</comment>
<comment type="pathway">
    <text evidence="1">Isoprenoid biosynthesis; isopentenyl diphosphate biosynthesis via DXP pathway; isopentenyl diphosphate from 1-deoxy-D-xylulose 5-phosphate: step 2/6.</text>
</comment>
<comment type="similarity">
    <text evidence="1">Belongs to the IspD/TarI cytidylyltransferase family. IspD subfamily.</text>
</comment>
<feature type="chain" id="PRO_0000075552" description="2-C-methyl-D-erythritol 4-phosphate cytidylyltransferase">
    <location>
        <begin position="1"/>
        <end position="219"/>
    </location>
</feature>
<feature type="site" description="Transition state stabilizer" evidence="1">
    <location>
        <position position="15"/>
    </location>
</feature>
<feature type="site" description="Transition state stabilizer" evidence="1">
    <location>
        <position position="22"/>
    </location>
</feature>
<feature type="site" description="Positions MEP for the nucleophilic attack" evidence="1">
    <location>
        <position position="151"/>
    </location>
</feature>
<feature type="site" description="Positions MEP for the nucleophilic attack" evidence="1">
    <location>
        <position position="205"/>
    </location>
</feature>
<proteinExistence type="inferred from homology"/>
<evidence type="ECO:0000255" key="1">
    <source>
        <dbReference type="HAMAP-Rule" id="MF_00108"/>
    </source>
</evidence>